<evidence type="ECO:0000250" key="1"/>
<evidence type="ECO:0000250" key="2">
    <source>
        <dbReference type="UniProtKB" id="Q8WYQ5"/>
    </source>
</evidence>
<evidence type="ECO:0000250" key="3">
    <source>
        <dbReference type="UniProtKB" id="Q9EQM6"/>
    </source>
</evidence>
<evidence type="ECO:0000255" key="4">
    <source>
        <dbReference type="PROSITE-ProRule" id="PRU00224"/>
    </source>
</evidence>
<evidence type="ECO:0000255" key="5">
    <source>
        <dbReference type="PROSITE-ProRule" id="PRU00266"/>
    </source>
</evidence>
<evidence type="ECO:0000256" key="6">
    <source>
        <dbReference type="SAM" id="MobiDB-lite"/>
    </source>
</evidence>
<gene>
    <name type="primary">DGCR8</name>
</gene>
<comment type="function">
    <text evidence="2 3">Component of the microprocessor complex that acts as a RNA- and heme-binding protein that is involved in the initial step of microRNA (miRNA) biogenesis. Component of the microprocessor complex that is required to process primary miRNA transcripts (pri-miRNAs) to release precursor miRNA (pre-miRNA) in the nucleus. Within the microprocessor complex, DGCR8 function as a molecular anchor necessary for the recognition of pri-miRNA at dsRNA-ssRNA junction and directs DROSHA to cleave 11 bp away form the junction to release hairpin-shaped pre-miRNAs that are subsequently cut by the cytoplasmic DICER to generate mature miRNAs. The heme-bound DGCR8 dimer binds pri-miRNAs as a cooperative trimer (of dimers) and is active in triggering pri-miRNA cleavage, whereas the heme-free DGCR8 monomer binds pri-miRNAs as a dimer and is much less active. Both double-stranded and single-stranded regions of a pri-miRNA are required for its binding. Specifically recognizes and binds N6-methyladenosine (m6A)-containing pri-miRNAs, a modification required for pri-miRNAs processing (By similarity). Involved in the silencing of embryonic stem cell self-renewal. Plays also a role in DNA repair by promoting the recruitment of RNF168 to RNF8 and MDC1 at DNA double-strand breaks and subsequently the clearance of DNA breaks (By similarity).</text>
</comment>
<comment type="cofactor">
    <cofactor evidence="2">
        <name>heme</name>
        <dbReference type="ChEBI" id="CHEBI:30413"/>
    </cofactor>
    <text evidence="2">Binds 1 heme group per homodimer.</text>
</comment>
<comment type="subunit">
    <text evidence="2 3">Monomer; in absence of heme. Homodimer; the association with heme promotes its dimerization. Component of the microprocessor complex, or pri-miRNA processing protein complex, which is composed of DROSHA and DGCR8. The microprocessor complex is a heterotrimer; each of the two DROSHA RNase III domains binds one DGCR8 (via C-terminal region). Interacts with ILF3, NCL and DROSHA. Interacts with CPSF3 and ISY1; this interaction is in an RNA dependent manner (By similarity). Interacts with PUS10; interaction promotes pri-miRNAs processing.</text>
</comment>
<comment type="subcellular location">
    <subcellularLocation>
        <location evidence="2">Nucleus</location>
    </subcellularLocation>
    <subcellularLocation>
        <location evidence="2">Nucleus</location>
        <location evidence="2">Nucleolus</location>
    </subcellularLocation>
    <text evidence="2">Colocalizes with nucleolin and DROSHA in the nucleolus. Mostly detected in the nucleolus as electron-dense granular patches around the fibrillar center (FC) and granular component (GC). Also detected in the nucleoplasm as small foci adjacent to splicing speckles near the chromatin structure. Localized with DROSHA in GW bodies (GWBs), also known as P-bodies.</text>
</comment>
<comment type="PTM">
    <text evidence="2">Phosphorylated at Ser-664 by ATM upon radiation, which is crucial for its stability.</text>
</comment>
<comment type="PTM">
    <text evidence="2">Ubiquitinated, leading to degradation in a proteasome-dependent manner. Deubiquitinated by USP51, leading to stabilization.</text>
</comment>
<sequence>METCGSPSPLPREPAGGVAMEDRARPLRALPRGQSPPPPLQTSSDAEVMDVGSGGDGQAEPPAEDPLNFYGASLLSKGSSSKARLLVDPNCSGHSPRTARHAPAVRKFSPDLKLLKDVKISVSFTESCRSEDRKVLYTGAERDVRAECGLALSPVIGDVHAGPFGGSVGNGVGAGGESAGKRDEEHELDQEKRVEYAVLDELEDFTDNLELDEEGAGGFTAKAIVQRDRVDEEALNFSYEDDFDNDVDALLEEGLCAPKKRRMEEKYGGDSDHPSDGETSVQPMMTKIKTVLKSRGRPPTEPLPDGWIMTFHNSGVPVYLHRESRVVTWSRPYFLGTGSIRKHGPPLTSIPCLHYRKMKDSEERERAAGIAPPEPELPPDEPDPLGTDAGPPDEKDPLGAEAAPGALGQVKAKVEVCKDESVDLEEFRNYLEKRFDFEQVTVKKFRTWAERRQFNREMKRKQAESERPILPANQKLITLSVQDAPTKKEFVINPNGKSEVCILHEYMQRVLKVRPVYSFFECENPSEPFGASVTIDGVTYGSGTASSKKLAKNKAARATLEILIPDFVKQTSEEKPRDSEELEYFNHISIEDSRVYELTSKAGLLSPYQILHECLKRNHGMGDTSIKFEVVPGKNQKSEYVMACGKHTVRGWCKNKRVGKQLASQKILQLLHPHVKNWGSLLRMYGRESSKMVKQETSDKSVIELQQFARKNKPNLHILSKLQEEMRRLAEEREETRKKPKMSIVASAQPGGEPLCTVDV</sequence>
<organism>
    <name type="scientific">Bos taurus</name>
    <name type="common">Bovine</name>
    <dbReference type="NCBI Taxonomy" id="9913"/>
    <lineage>
        <taxon>Eukaryota</taxon>
        <taxon>Metazoa</taxon>
        <taxon>Chordata</taxon>
        <taxon>Craniata</taxon>
        <taxon>Vertebrata</taxon>
        <taxon>Euteleostomi</taxon>
        <taxon>Mammalia</taxon>
        <taxon>Eutheria</taxon>
        <taxon>Laurasiatheria</taxon>
        <taxon>Artiodactyla</taxon>
        <taxon>Ruminantia</taxon>
        <taxon>Pecora</taxon>
        <taxon>Bovidae</taxon>
        <taxon>Bovinae</taxon>
        <taxon>Bos</taxon>
    </lineage>
</organism>
<protein>
    <recommendedName>
        <fullName>Microprocessor complex subunit DGCR8</fullName>
    </recommendedName>
    <alternativeName>
        <fullName>DiGeorge syndrome critical region 8 homolog</fullName>
    </alternativeName>
</protein>
<reference key="1">
    <citation type="submission" date="2007-07" db="EMBL/GenBank/DDBJ databases">
        <authorList>
            <consortium name="NIH - Mammalian Gene Collection (MGC) project"/>
        </authorList>
    </citation>
    <scope>NUCLEOTIDE SEQUENCE [LARGE SCALE MRNA]</scope>
    <source>
        <strain>Hereford</strain>
        <tissue>Hippocampus</tissue>
    </source>
</reference>
<proteinExistence type="evidence at transcript level"/>
<name>DGCR8_BOVIN</name>
<dbReference type="EMBL" id="BC150109">
    <property type="protein sequence ID" value="AAI50110.1"/>
    <property type="molecule type" value="mRNA"/>
</dbReference>
<dbReference type="RefSeq" id="NP_001094674.1">
    <property type="nucleotide sequence ID" value="NM_001101204.1"/>
</dbReference>
<dbReference type="BMRB" id="A6QR44"/>
<dbReference type="SMR" id="A6QR44"/>
<dbReference type="FunCoup" id="A6QR44">
    <property type="interactions" value="5447"/>
</dbReference>
<dbReference type="STRING" id="9913.ENSBTAP00000057457"/>
<dbReference type="PaxDb" id="9913-ENSBTAP00000026474"/>
<dbReference type="Ensembl" id="ENSBTAT00000026474.6">
    <property type="protein sequence ID" value="ENSBTAP00000026474.4"/>
    <property type="gene ID" value="ENSBTAG00000019869.6"/>
</dbReference>
<dbReference type="GeneID" id="540254"/>
<dbReference type="KEGG" id="bta:540254"/>
<dbReference type="CTD" id="54487"/>
<dbReference type="VEuPathDB" id="HostDB:ENSBTAG00000019869"/>
<dbReference type="VGNC" id="VGNC:28023">
    <property type="gene designation" value="DGCR8"/>
</dbReference>
<dbReference type="eggNOG" id="KOG4334">
    <property type="taxonomic scope" value="Eukaryota"/>
</dbReference>
<dbReference type="GeneTree" id="ENSGT00390000015977"/>
<dbReference type="HOGENOM" id="CLU_017211_3_0_1"/>
<dbReference type="InParanoid" id="A6QR44"/>
<dbReference type="OrthoDB" id="112668at2759"/>
<dbReference type="TreeFam" id="TF324256"/>
<dbReference type="Proteomes" id="UP000009136">
    <property type="component" value="Chromosome 17"/>
</dbReference>
<dbReference type="Bgee" id="ENSBTAG00000019869">
    <property type="expression patterns" value="Expressed in ruminant reticulum and 108 other cell types or tissues"/>
</dbReference>
<dbReference type="GO" id="GO:0005829">
    <property type="term" value="C:cytosol"/>
    <property type="evidence" value="ECO:0007669"/>
    <property type="project" value="Ensembl"/>
</dbReference>
<dbReference type="GO" id="GO:0098978">
    <property type="term" value="C:glutamatergic synapse"/>
    <property type="evidence" value="ECO:0007669"/>
    <property type="project" value="Ensembl"/>
</dbReference>
<dbReference type="GO" id="GO:0070877">
    <property type="term" value="C:microprocessor complex"/>
    <property type="evidence" value="ECO:0000318"/>
    <property type="project" value="GO_Central"/>
</dbReference>
<dbReference type="GO" id="GO:0016604">
    <property type="term" value="C:nuclear body"/>
    <property type="evidence" value="ECO:0007669"/>
    <property type="project" value="Ensembl"/>
</dbReference>
<dbReference type="GO" id="GO:0005730">
    <property type="term" value="C:nucleolus"/>
    <property type="evidence" value="ECO:0007669"/>
    <property type="project" value="UniProtKB-SubCell"/>
</dbReference>
<dbReference type="GO" id="GO:0014069">
    <property type="term" value="C:postsynaptic density"/>
    <property type="evidence" value="ECO:0007669"/>
    <property type="project" value="Ensembl"/>
</dbReference>
<dbReference type="GO" id="GO:0003725">
    <property type="term" value="F:double-stranded RNA binding"/>
    <property type="evidence" value="ECO:0000318"/>
    <property type="project" value="GO_Central"/>
</dbReference>
<dbReference type="GO" id="GO:0020037">
    <property type="term" value="F:heme binding"/>
    <property type="evidence" value="ECO:0007669"/>
    <property type="project" value="Ensembl"/>
</dbReference>
<dbReference type="GO" id="GO:0046872">
    <property type="term" value="F:metal ion binding"/>
    <property type="evidence" value="ECO:0007669"/>
    <property type="project" value="UniProtKB-KW"/>
</dbReference>
<dbReference type="GO" id="GO:0070878">
    <property type="term" value="F:primary miRNA binding"/>
    <property type="evidence" value="ECO:0000318"/>
    <property type="project" value="GO_Central"/>
</dbReference>
<dbReference type="GO" id="GO:0042803">
    <property type="term" value="F:protein homodimerization activity"/>
    <property type="evidence" value="ECO:0007669"/>
    <property type="project" value="Ensembl"/>
</dbReference>
<dbReference type="GO" id="GO:0140517">
    <property type="term" value="F:protein-RNA adaptor activity"/>
    <property type="evidence" value="ECO:0007669"/>
    <property type="project" value="Ensembl"/>
</dbReference>
<dbReference type="GO" id="GO:0006974">
    <property type="term" value="P:DNA damage response"/>
    <property type="evidence" value="ECO:0007669"/>
    <property type="project" value="Ensembl"/>
</dbReference>
<dbReference type="GO" id="GO:2000633">
    <property type="term" value="P:positive regulation of pre-miRNA processing"/>
    <property type="evidence" value="ECO:0007669"/>
    <property type="project" value="Ensembl"/>
</dbReference>
<dbReference type="GO" id="GO:0031053">
    <property type="term" value="P:primary miRNA processing"/>
    <property type="evidence" value="ECO:0000318"/>
    <property type="project" value="GO_Central"/>
</dbReference>
<dbReference type="GO" id="GO:0072091">
    <property type="term" value="P:regulation of stem cell proliferation"/>
    <property type="evidence" value="ECO:0007669"/>
    <property type="project" value="Ensembl"/>
</dbReference>
<dbReference type="CDD" id="cd19867">
    <property type="entry name" value="DSRM_DGCR8_rpt1"/>
    <property type="match status" value="1"/>
</dbReference>
<dbReference type="CDD" id="cd19868">
    <property type="entry name" value="DSRM_DGCR8_rpt2"/>
    <property type="match status" value="1"/>
</dbReference>
<dbReference type="CDD" id="cd00201">
    <property type="entry name" value="WW"/>
    <property type="match status" value="1"/>
</dbReference>
<dbReference type="FunFam" id="2.20.70.10:FF:000018">
    <property type="entry name" value="DGCR8 microprocessor complex subunit"/>
    <property type="match status" value="1"/>
</dbReference>
<dbReference type="FunFam" id="3.30.160.20:FF:000023">
    <property type="entry name" value="DGCR8, microprocessor complex subunit"/>
    <property type="match status" value="1"/>
</dbReference>
<dbReference type="FunFam" id="3.30.160.20:FF:000021">
    <property type="entry name" value="Microprocessor complex subunit DGCR8"/>
    <property type="match status" value="1"/>
</dbReference>
<dbReference type="FunFam" id="3.30.160.590:FF:000001">
    <property type="entry name" value="microprocessor complex subunit DGCR8"/>
    <property type="match status" value="1"/>
</dbReference>
<dbReference type="Gene3D" id="2.20.70.10">
    <property type="match status" value="1"/>
</dbReference>
<dbReference type="Gene3D" id="3.30.160.20">
    <property type="match status" value="2"/>
</dbReference>
<dbReference type="Gene3D" id="3.30.160.590">
    <property type="match status" value="1"/>
</dbReference>
<dbReference type="InterPro" id="IPR040375">
    <property type="entry name" value="DGCR8"/>
</dbReference>
<dbReference type="InterPro" id="IPR014720">
    <property type="entry name" value="dsRBD_dom"/>
</dbReference>
<dbReference type="InterPro" id="IPR001202">
    <property type="entry name" value="WW_dom"/>
</dbReference>
<dbReference type="InterPro" id="IPR036020">
    <property type="entry name" value="WW_dom_sf"/>
</dbReference>
<dbReference type="PANTHER" id="PTHR13482:SF3">
    <property type="entry name" value="MICROPROCESSOR COMPLEX SUBUNIT DGCR8"/>
    <property type="match status" value="1"/>
</dbReference>
<dbReference type="PANTHER" id="PTHR13482">
    <property type="entry name" value="MICRORNA PROCESSOR COMPLEX SUBUNIT DGCR8"/>
    <property type="match status" value="1"/>
</dbReference>
<dbReference type="Pfam" id="PF00035">
    <property type="entry name" value="dsrm"/>
    <property type="match status" value="2"/>
</dbReference>
<dbReference type="SMART" id="SM00358">
    <property type="entry name" value="DSRM"/>
    <property type="match status" value="2"/>
</dbReference>
<dbReference type="SMART" id="SM00456">
    <property type="entry name" value="WW"/>
    <property type="match status" value="1"/>
</dbReference>
<dbReference type="SUPFAM" id="SSF54768">
    <property type="entry name" value="dsRNA-binding domain-like"/>
    <property type="match status" value="2"/>
</dbReference>
<dbReference type="SUPFAM" id="SSF51045">
    <property type="entry name" value="WW domain"/>
    <property type="match status" value="1"/>
</dbReference>
<dbReference type="PROSITE" id="PS50137">
    <property type="entry name" value="DS_RBD"/>
    <property type="match status" value="1"/>
</dbReference>
<dbReference type="PROSITE" id="PS50020">
    <property type="entry name" value="WW_DOMAIN_2"/>
    <property type="match status" value="1"/>
</dbReference>
<accession>A6QR44</accession>
<keyword id="KW-0349">Heme</keyword>
<keyword id="KW-0408">Iron</keyword>
<keyword id="KW-1017">Isopeptide bond</keyword>
<keyword id="KW-0479">Metal-binding</keyword>
<keyword id="KW-0539">Nucleus</keyword>
<keyword id="KW-0597">Phosphoprotein</keyword>
<keyword id="KW-1185">Reference proteome</keyword>
<keyword id="KW-0677">Repeat</keyword>
<keyword id="KW-0694">RNA-binding</keyword>
<keyword id="KW-0832">Ubl conjugation</keyword>
<feature type="chain" id="PRO_0000384373" description="Microprocessor complex subunit DGCR8">
    <location>
        <begin position="1"/>
        <end position="760"/>
    </location>
</feature>
<feature type="domain" description="WW" evidence="4">
    <location>
        <begin position="301"/>
        <end position="334"/>
    </location>
</feature>
<feature type="domain" description="DRBM 1" evidence="5">
    <location>
        <begin position="498"/>
        <end position="565"/>
    </location>
</feature>
<feature type="domain" description="DRBM 2" evidence="5">
    <location>
        <begin position="606"/>
        <end position="673"/>
    </location>
</feature>
<feature type="region of interest" description="Necessary for interaction with NCL" evidence="1">
    <location>
        <begin position="1"/>
        <end position="342"/>
    </location>
</feature>
<feature type="region of interest" description="Necessary for nuclear localization and retention" evidence="1">
    <location>
        <begin position="1"/>
        <end position="275"/>
    </location>
</feature>
<feature type="region of interest" description="Disordered" evidence="6">
    <location>
        <begin position="1"/>
        <end position="71"/>
    </location>
</feature>
<feature type="region of interest" description="Disordered" evidence="6">
    <location>
        <begin position="263"/>
        <end position="284"/>
    </location>
</feature>
<feature type="region of interest" description="Necessary for heme-binding and pri-miRNA processing" evidence="1">
    <location>
        <begin position="276"/>
        <end position="738"/>
    </location>
</feature>
<feature type="region of interest" description="Disordered" evidence="6">
    <location>
        <begin position="361"/>
        <end position="405"/>
    </location>
</feature>
<feature type="region of interest" description="Interaction with DROSHA" evidence="2">
    <location>
        <begin position="688"/>
        <end position="760"/>
    </location>
</feature>
<feature type="region of interest" description="Disordered" evidence="6">
    <location>
        <begin position="731"/>
        <end position="760"/>
    </location>
</feature>
<feature type="compositionally biased region" description="Basic and acidic residues" evidence="6">
    <location>
        <begin position="263"/>
        <end position="276"/>
    </location>
</feature>
<feature type="binding site" description="axial binding residue" evidence="2">
    <location>
        <position position="352"/>
    </location>
    <ligand>
        <name>heme</name>
        <dbReference type="ChEBI" id="CHEBI:30413"/>
    </ligand>
    <ligandPart>
        <name>Fe</name>
        <dbReference type="ChEBI" id="CHEBI:18248"/>
    </ligandPart>
</feature>
<feature type="modified residue" description="Phosphoserine" evidence="2">
    <location>
        <position position="35"/>
    </location>
</feature>
<feature type="modified residue" description="Phosphoserine" evidence="2">
    <location>
        <position position="92"/>
    </location>
</feature>
<feature type="modified residue" description="Phosphoserine" evidence="2">
    <location>
        <position position="95"/>
    </location>
</feature>
<feature type="modified residue" description="Phosphoserine" evidence="2">
    <location>
        <position position="271"/>
    </location>
</feature>
<feature type="modified residue" description="Phosphoserine" evidence="2">
    <location>
        <position position="275"/>
    </location>
</feature>
<feature type="modified residue" description="Phosphothreonine" evidence="3">
    <location>
        <position position="279"/>
    </location>
</feature>
<feature type="modified residue" description="Phosphoserine" evidence="2">
    <location>
        <position position="664"/>
    </location>
</feature>
<feature type="cross-link" description="Glycyl lysine isopeptide (Lys-Gly) (interchain with G-Cter in SUMO2)" evidence="2">
    <location>
        <position position="411"/>
    </location>
</feature>
<feature type="cross-link" description="Glycyl lysine isopeptide (Lys-Gly) (interchain with G-Cter in SUMO2)" evidence="2">
    <location>
        <position position="487"/>
    </location>
</feature>
<feature type="cross-link" description="Glycyl lysine isopeptide (Lys-Gly) (interchain with G-Cter in SUMO2)" evidence="2">
    <location>
        <position position="694"/>
    </location>
</feature>